<evidence type="ECO:0000250" key="1">
    <source>
        <dbReference type="UniProtKB" id="P0AEJ4"/>
    </source>
</evidence>
<evidence type="ECO:0000255" key="2"/>
<evidence type="ECO:0000255" key="3">
    <source>
        <dbReference type="PROSITE-ProRule" id="PRU00102"/>
    </source>
</evidence>
<evidence type="ECO:0000255" key="4">
    <source>
        <dbReference type="PROSITE-ProRule" id="PRU00107"/>
    </source>
</evidence>
<evidence type="ECO:0000269" key="5">
    <source>
    </source>
</evidence>
<evidence type="ECO:0000305" key="6"/>
<accession>P41406</accession>
<name>ENVZ_SALTI</name>
<keyword id="KW-0067">ATP-binding</keyword>
<keyword id="KW-0997">Cell inner membrane</keyword>
<keyword id="KW-1003">Cell membrane</keyword>
<keyword id="KW-0418">Kinase</keyword>
<keyword id="KW-0472">Membrane</keyword>
<keyword id="KW-0547">Nucleotide-binding</keyword>
<keyword id="KW-0597">Phosphoprotein</keyword>
<keyword id="KW-0346">Stress response</keyword>
<keyword id="KW-0808">Transferase</keyword>
<keyword id="KW-0812">Transmembrane</keyword>
<keyword id="KW-1133">Transmembrane helix</keyword>
<keyword id="KW-0902">Two-component regulatory system</keyword>
<protein>
    <recommendedName>
        <fullName evidence="6">Sensor histidine kinase EnvZ</fullName>
        <ecNumber evidence="1">2.7.13.3</ecNumber>
    </recommendedName>
    <alternativeName>
        <fullName evidence="6">Osmolarity sensor protein EnvZ</fullName>
    </alternativeName>
</protein>
<dbReference type="EC" id="2.7.13.3" evidence="1"/>
<dbReference type="EMBL" id="X77305">
    <property type="protein sequence ID" value="CAA54511.1"/>
    <property type="molecule type" value="Genomic_DNA"/>
</dbReference>
<dbReference type="EMBL" id="X78270">
    <property type="protein sequence ID" value="CAA55077.1"/>
    <property type="molecule type" value="Genomic_DNA"/>
</dbReference>
<dbReference type="EMBL" id="AL513382">
    <property type="protein sequence ID" value="CAD08113.1"/>
    <property type="molecule type" value="Genomic_DNA"/>
</dbReference>
<dbReference type="EMBL" id="AE014613">
    <property type="protein sequence ID" value="AAO71475.1"/>
    <property type="molecule type" value="Genomic_DNA"/>
</dbReference>
<dbReference type="PIR" id="S41888">
    <property type="entry name" value="S41888"/>
</dbReference>
<dbReference type="RefSeq" id="NP_458403.1">
    <property type="nucleotide sequence ID" value="NC_003198.1"/>
</dbReference>
<dbReference type="RefSeq" id="WP_001253815.1">
    <property type="nucleotide sequence ID" value="NZ_WSUR01000001.1"/>
</dbReference>
<dbReference type="SMR" id="P41406"/>
<dbReference type="STRING" id="220341.gene:17588126"/>
<dbReference type="KEGG" id="stt:t4005"/>
<dbReference type="KEGG" id="sty:STY4295"/>
<dbReference type="PATRIC" id="fig|220341.7.peg.4389"/>
<dbReference type="eggNOG" id="COG2205">
    <property type="taxonomic scope" value="Bacteria"/>
</dbReference>
<dbReference type="HOGENOM" id="CLU_000445_89_27_6"/>
<dbReference type="OMA" id="WIRPPQA"/>
<dbReference type="OrthoDB" id="9804645at2"/>
<dbReference type="BRENDA" id="2.7.13.3">
    <property type="organism ID" value="5557"/>
</dbReference>
<dbReference type="Proteomes" id="UP000000541">
    <property type="component" value="Chromosome"/>
</dbReference>
<dbReference type="Proteomes" id="UP000002670">
    <property type="component" value="Chromosome"/>
</dbReference>
<dbReference type="GO" id="GO:0005886">
    <property type="term" value="C:plasma membrane"/>
    <property type="evidence" value="ECO:0007669"/>
    <property type="project" value="UniProtKB-SubCell"/>
</dbReference>
<dbReference type="GO" id="GO:0005524">
    <property type="term" value="F:ATP binding"/>
    <property type="evidence" value="ECO:0007669"/>
    <property type="project" value="UniProtKB-KW"/>
</dbReference>
<dbReference type="GO" id="GO:0000155">
    <property type="term" value="F:phosphorelay sensor kinase activity"/>
    <property type="evidence" value="ECO:0007669"/>
    <property type="project" value="InterPro"/>
</dbReference>
<dbReference type="CDD" id="cd06225">
    <property type="entry name" value="HAMP"/>
    <property type="match status" value="1"/>
</dbReference>
<dbReference type="CDD" id="cd16950">
    <property type="entry name" value="HATPase_EnvZ-like"/>
    <property type="match status" value="1"/>
</dbReference>
<dbReference type="CDD" id="cd00082">
    <property type="entry name" value="HisKA"/>
    <property type="match status" value="1"/>
</dbReference>
<dbReference type="FunFam" id="1.10.287.130:FF:000006">
    <property type="entry name" value="Osmolarity two-component histidine kinase EnvZ"/>
    <property type="match status" value="1"/>
</dbReference>
<dbReference type="FunFam" id="3.30.565.10:FF:000018">
    <property type="entry name" value="Two-component sensor kinase EnvZ"/>
    <property type="match status" value="1"/>
</dbReference>
<dbReference type="Gene3D" id="1.10.287.130">
    <property type="match status" value="1"/>
</dbReference>
<dbReference type="Gene3D" id="3.30.565.10">
    <property type="entry name" value="Histidine kinase-like ATPase, C-terminal domain"/>
    <property type="match status" value="1"/>
</dbReference>
<dbReference type="InterPro" id="IPR050980">
    <property type="entry name" value="2C_sensor_his_kinase"/>
</dbReference>
<dbReference type="InterPro" id="IPR003660">
    <property type="entry name" value="HAMP_dom"/>
</dbReference>
<dbReference type="InterPro" id="IPR036890">
    <property type="entry name" value="HATPase_C_sf"/>
</dbReference>
<dbReference type="InterPro" id="IPR005467">
    <property type="entry name" value="His_kinase_dom"/>
</dbReference>
<dbReference type="InterPro" id="IPR003661">
    <property type="entry name" value="HisK_dim/P_dom"/>
</dbReference>
<dbReference type="InterPro" id="IPR036097">
    <property type="entry name" value="HisK_dim/P_sf"/>
</dbReference>
<dbReference type="InterPro" id="IPR004358">
    <property type="entry name" value="Sig_transdc_His_kin-like_C"/>
</dbReference>
<dbReference type="NCBIfam" id="NF007004">
    <property type="entry name" value="PRK09467.1"/>
    <property type="match status" value="1"/>
</dbReference>
<dbReference type="PANTHER" id="PTHR44936:SF5">
    <property type="entry name" value="SENSOR HISTIDINE KINASE ENVZ"/>
    <property type="match status" value="1"/>
</dbReference>
<dbReference type="PANTHER" id="PTHR44936">
    <property type="entry name" value="SENSOR PROTEIN CREC"/>
    <property type="match status" value="1"/>
</dbReference>
<dbReference type="Pfam" id="PF00672">
    <property type="entry name" value="HAMP"/>
    <property type="match status" value="1"/>
</dbReference>
<dbReference type="Pfam" id="PF02518">
    <property type="entry name" value="HATPase_c"/>
    <property type="match status" value="1"/>
</dbReference>
<dbReference type="Pfam" id="PF00512">
    <property type="entry name" value="HisKA"/>
    <property type="match status" value="1"/>
</dbReference>
<dbReference type="PRINTS" id="PR00344">
    <property type="entry name" value="BCTRLSENSOR"/>
</dbReference>
<dbReference type="SMART" id="SM00304">
    <property type="entry name" value="HAMP"/>
    <property type="match status" value="1"/>
</dbReference>
<dbReference type="SMART" id="SM00387">
    <property type="entry name" value="HATPase_c"/>
    <property type="match status" value="1"/>
</dbReference>
<dbReference type="SMART" id="SM00388">
    <property type="entry name" value="HisKA"/>
    <property type="match status" value="1"/>
</dbReference>
<dbReference type="SUPFAM" id="SSF55874">
    <property type="entry name" value="ATPase domain of HSP90 chaperone/DNA topoisomerase II/histidine kinase"/>
    <property type="match status" value="1"/>
</dbReference>
<dbReference type="SUPFAM" id="SSF47384">
    <property type="entry name" value="Homodimeric domain of signal transducing histidine kinase"/>
    <property type="match status" value="1"/>
</dbReference>
<dbReference type="PROSITE" id="PS50885">
    <property type="entry name" value="HAMP"/>
    <property type="match status" value="1"/>
</dbReference>
<dbReference type="PROSITE" id="PS50109">
    <property type="entry name" value="HIS_KIN"/>
    <property type="match status" value="1"/>
</dbReference>
<proteinExistence type="inferred from homology"/>
<gene>
    <name type="primary">envZ</name>
    <name type="ordered locus">STY4295</name>
    <name type="ordered locus">t4005</name>
</gene>
<comment type="function">
    <text evidence="1 5">Member of the two-component regulatory system EnvZ/OmpR involved in regulating expression of the outer membrane porins OmpC and OmpF as well as other genes. Unlike E.coli or S.typhimurium both porins are expressed constitutively. Involved in regulation of the biosynthesis of Vi polysaccharide, a capsular antigen thought to be involved in the virulence of S.typhi. Vi antigen is synthesized at low NaCl concentrations (under 0.4 M) (PubMed:8063417). EnvZ functions as a membrane-associated protein kinase that phosphorylates OmpR in response to environmental signals (By similarity).</text>
</comment>
<comment type="catalytic activity">
    <reaction evidence="1">
        <text>ATP + protein L-histidine = ADP + protein N-phospho-L-histidine.</text>
        <dbReference type="EC" id="2.7.13.3"/>
    </reaction>
</comment>
<comment type="subunit">
    <text evidence="1">Homodimer.</text>
</comment>
<comment type="subcellular location">
    <subcellularLocation>
        <location evidence="1">Cell inner membrane</location>
        <topology evidence="2">Multi-pass membrane protein</topology>
    </subcellularLocation>
</comment>
<comment type="domain">
    <text evidence="1">Has several major domains; the N-terminal cytoplasmic domain is followed by 2 transmembrane helices that anchor the protein in the membrane; the periplasmic domain between the helices interacts with MrzA. The cytoplasmic C-terminal domain has a HAMP domain joined by a flexible linker to a histidine kinase domain. The HAMP domain by itself is intrinsically disordered. The cytoplasmic dimerization domain (CDD) forms an osmosensitive core and includes the autophosphorylated histidine residue.</text>
</comment>
<comment type="PTM">
    <text evidence="1">Autophosphorylated.</text>
</comment>
<organism>
    <name type="scientific">Salmonella typhi</name>
    <dbReference type="NCBI Taxonomy" id="90370"/>
    <lineage>
        <taxon>Bacteria</taxon>
        <taxon>Pseudomonadati</taxon>
        <taxon>Pseudomonadota</taxon>
        <taxon>Gammaproteobacteria</taxon>
        <taxon>Enterobacterales</taxon>
        <taxon>Enterobacteriaceae</taxon>
        <taxon>Salmonella</taxon>
    </lineage>
</organism>
<feature type="chain" id="PRO_0000074760" description="Sensor histidine kinase EnvZ">
    <location>
        <begin position="1"/>
        <end position="450"/>
    </location>
</feature>
<feature type="topological domain" description="Cytoplasmic" evidence="2">
    <location>
        <begin position="1"/>
        <end position="15"/>
    </location>
</feature>
<feature type="transmembrane region" description="Helical" evidence="6">
    <location>
        <begin position="16"/>
        <end position="35"/>
    </location>
</feature>
<feature type="topological domain" description="Periplasmic" evidence="2">
    <location>
        <begin position="36"/>
        <end position="158"/>
    </location>
</feature>
<feature type="transmembrane region" description="Helical" evidence="6">
    <location>
        <begin position="159"/>
        <end position="179"/>
    </location>
</feature>
<feature type="topological domain" description="Cytoplasmic" evidence="2">
    <location>
        <begin position="180"/>
        <end position="450"/>
    </location>
</feature>
<feature type="domain" description="HAMP" evidence="3">
    <location>
        <begin position="180"/>
        <end position="232"/>
    </location>
</feature>
<feature type="domain" description="Histidine kinase" evidence="4">
    <location>
        <begin position="240"/>
        <end position="440"/>
    </location>
</feature>
<feature type="region of interest" description="Cytoplasmic dimerization domain (CDD), when dimerized forms osmosensitive core" evidence="1">
    <location>
        <begin position="223"/>
        <end position="289"/>
    </location>
</feature>
<feature type="binding site" evidence="1">
    <location>
        <position position="243"/>
    </location>
    <ligand>
        <name>ATP</name>
        <dbReference type="ChEBI" id="CHEBI:30616"/>
    </ligand>
</feature>
<feature type="binding site" evidence="1">
    <location>
        <begin position="347"/>
        <end position="351"/>
    </location>
    <ligand>
        <name>ATP</name>
        <dbReference type="ChEBI" id="CHEBI:30616"/>
    </ligand>
</feature>
<feature type="binding site" evidence="1">
    <location>
        <position position="373"/>
    </location>
    <ligand>
        <name>ATP</name>
        <dbReference type="ChEBI" id="CHEBI:30616"/>
    </ligand>
</feature>
<feature type="binding site" evidence="1">
    <location>
        <begin position="392"/>
        <end position="393"/>
    </location>
    <ligand>
        <name>ATP</name>
        <dbReference type="ChEBI" id="CHEBI:30616"/>
    </ligand>
</feature>
<feature type="binding site" evidence="1">
    <location>
        <begin position="402"/>
        <end position="406"/>
    </location>
    <ligand>
        <name>ATP</name>
        <dbReference type="ChEBI" id="CHEBI:30616"/>
    </ligand>
</feature>
<feature type="modified residue" description="Phosphohistidine; by autocatalysis" evidence="1 4">
    <location>
        <position position="243"/>
    </location>
</feature>
<sequence length="450" mass="50420">MRRMRFSPRSSFARTLLLIVTLLFVSLVTTYLVVLNFAILPSLQQFNKVLAYEVRMLMTDKLQLEDGTQLVVPPAFRREIYRELGISLYTNEAAEEAGLRWAQHYEFLSHQMAQQLGGPTEVRVEVNKSSPVVWLKTWLSPNIWVRVPLTEIHQGDFSPLFRYTLAIMLLAIGGAWLFIRIQNRPLVDLEHAALQVGKGIIPPPLREYGASEVRSVTRAFNHMAAGVKQLADDRTLLMAGVSHDLRTPLTRIRLATEMMGEEDGYLAESINKDIEECNAIIEQFIDYLRTGQEMPMEMADLNSVLGEVIAAESGYEREINTALQAGSIQVKMHPLSIKRAVANMVVNAARYGNCWIKVSSGTESHRAWFQVEDDGPGIKPEQRKHLFQPFVRGDSARSTSGTGLGLAIVQRIIDNHNGMLEIGTSERGGLSIRAWLPVPVARVQGTTKEA</sequence>
<reference key="1">
    <citation type="journal article" date="1995" name="Asia Pac. J. Mol. Biol. Biotechnol.">
        <title>Cloning and characterization of the Salmonella typhi ompR and envZ genes.</title>
        <authorList>
            <person name="Martinez-Flores I."/>
            <person name="Bustamante V."/>
            <person name="Puente J.L."/>
            <person name="Calva E."/>
        </authorList>
    </citation>
    <scope>NUCLEOTIDE SEQUENCE [GENOMIC DNA]</scope>
    <source>
        <strain>IMSS-1</strain>
    </source>
</reference>
<reference key="2">
    <citation type="journal article" date="1994" name="Infect. Immun.">
        <title>Characterization of defined ompR mutants of Salmonella typhi: ompR is involved in the regulation of Vi polysaccharide expression.</title>
        <authorList>
            <person name="Pickard D.J."/>
            <person name="Li J."/>
            <person name="Roberts M.R."/>
            <person name="Maskell D."/>
            <person name="Hone D."/>
            <person name="Levine M."/>
            <person name="Dougan G."/>
            <person name="Chatfield S."/>
        </authorList>
    </citation>
    <scope>NUCLEOTIDE SEQUENCE [GENOMIC DNA]</scope>
    <scope>FUNCTION</scope>
    <source>
        <strain>ATCC 700931 / Ty2 / CVD 908</strain>
    </source>
</reference>
<reference key="3">
    <citation type="journal article" date="2001" name="Nature">
        <title>Complete genome sequence of a multiple drug resistant Salmonella enterica serovar Typhi CT18.</title>
        <authorList>
            <person name="Parkhill J."/>
            <person name="Dougan G."/>
            <person name="James K.D."/>
            <person name="Thomson N.R."/>
            <person name="Pickard D."/>
            <person name="Wain J."/>
            <person name="Churcher C.M."/>
            <person name="Mungall K.L."/>
            <person name="Bentley S.D."/>
            <person name="Holden M.T.G."/>
            <person name="Sebaihia M."/>
            <person name="Baker S."/>
            <person name="Basham D."/>
            <person name="Brooks K."/>
            <person name="Chillingworth T."/>
            <person name="Connerton P."/>
            <person name="Cronin A."/>
            <person name="Davis P."/>
            <person name="Davies R.M."/>
            <person name="Dowd L."/>
            <person name="White N."/>
            <person name="Farrar J."/>
            <person name="Feltwell T."/>
            <person name="Hamlin N."/>
            <person name="Haque A."/>
            <person name="Hien T.T."/>
            <person name="Holroyd S."/>
            <person name="Jagels K."/>
            <person name="Krogh A."/>
            <person name="Larsen T.S."/>
            <person name="Leather S."/>
            <person name="Moule S."/>
            <person name="O'Gaora P."/>
            <person name="Parry C."/>
            <person name="Quail M.A."/>
            <person name="Rutherford K.M."/>
            <person name="Simmonds M."/>
            <person name="Skelton J."/>
            <person name="Stevens K."/>
            <person name="Whitehead S."/>
            <person name="Barrell B.G."/>
        </authorList>
    </citation>
    <scope>NUCLEOTIDE SEQUENCE [LARGE SCALE GENOMIC DNA]</scope>
    <source>
        <strain>CT18</strain>
    </source>
</reference>
<reference key="4">
    <citation type="journal article" date="2003" name="J. Bacteriol.">
        <title>Comparative genomics of Salmonella enterica serovar Typhi strains Ty2 and CT18.</title>
        <authorList>
            <person name="Deng W."/>
            <person name="Liou S.-R."/>
            <person name="Plunkett G. III"/>
            <person name="Mayhew G.F."/>
            <person name="Rose D.J."/>
            <person name="Burland V."/>
            <person name="Kodoyianni V."/>
            <person name="Schwartz D.C."/>
            <person name="Blattner F.R."/>
        </authorList>
    </citation>
    <scope>NUCLEOTIDE SEQUENCE [LARGE SCALE GENOMIC DNA]</scope>
    <source>
        <strain>ATCC 700931 / Ty2</strain>
    </source>
</reference>